<reference key="1">
    <citation type="journal article" date="2007" name="Nature">
        <title>Evolution of genes and genomes on the Drosophila phylogeny.</title>
        <authorList>
            <consortium name="Drosophila 12 genomes consortium"/>
        </authorList>
    </citation>
    <scope>NUCLEOTIDE SEQUENCE [LARGE SCALE GENOMIC DNA]</scope>
    <source>
        <strain>Tucson 15081-1352.22</strain>
    </source>
</reference>
<name>MTNB_DROMO</name>
<dbReference type="EC" id="4.2.1.109" evidence="1"/>
<dbReference type="EMBL" id="CH933815">
    <property type="protein sequence ID" value="EDW07997.1"/>
    <property type="molecule type" value="Genomic_DNA"/>
</dbReference>
<dbReference type="SMR" id="B4L8M2"/>
<dbReference type="FunCoup" id="B4L8M2">
    <property type="interactions" value="913"/>
</dbReference>
<dbReference type="EnsemblMetazoa" id="FBtr0165058">
    <property type="protein sequence ID" value="FBpp0163550"/>
    <property type="gene ID" value="FBgn0137086"/>
</dbReference>
<dbReference type="EnsemblMetazoa" id="XM_002011840.4">
    <property type="protein sequence ID" value="XP_002011876.1"/>
    <property type="gene ID" value="LOC6586254"/>
</dbReference>
<dbReference type="GeneID" id="6586254"/>
<dbReference type="KEGG" id="dmo:Dmoj_GI14333"/>
<dbReference type="eggNOG" id="KOG2631">
    <property type="taxonomic scope" value="Eukaryota"/>
</dbReference>
<dbReference type="HOGENOM" id="CLU_006033_4_0_1"/>
<dbReference type="InParanoid" id="B4L8M2"/>
<dbReference type="OMA" id="WFPGTSG"/>
<dbReference type="OrthoDB" id="191080at2759"/>
<dbReference type="PhylomeDB" id="B4L8M2"/>
<dbReference type="UniPathway" id="UPA00904">
    <property type="reaction ID" value="UER00875"/>
</dbReference>
<dbReference type="Proteomes" id="UP000009192">
    <property type="component" value="Unassembled WGS sequence"/>
</dbReference>
<dbReference type="GO" id="GO:0005737">
    <property type="term" value="C:cytoplasm"/>
    <property type="evidence" value="ECO:0007669"/>
    <property type="project" value="UniProtKB-SubCell"/>
</dbReference>
<dbReference type="GO" id="GO:0046570">
    <property type="term" value="F:methylthioribulose 1-phosphate dehydratase activity"/>
    <property type="evidence" value="ECO:0000250"/>
    <property type="project" value="UniProtKB"/>
</dbReference>
<dbReference type="GO" id="GO:0008270">
    <property type="term" value="F:zinc ion binding"/>
    <property type="evidence" value="ECO:0000250"/>
    <property type="project" value="UniProtKB"/>
</dbReference>
<dbReference type="GO" id="GO:0019509">
    <property type="term" value="P:L-methionine salvage from methylthioadenosine"/>
    <property type="evidence" value="ECO:0007669"/>
    <property type="project" value="UniProtKB-UniRule"/>
</dbReference>
<dbReference type="FunFam" id="3.40.225.10:FF:000003">
    <property type="entry name" value="Methylthioribulose-1-phosphate dehydratase"/>
    <property type="match status" value="1"/>
</dbReference>
<dbReference type="Gene3D" id="3.40.225.10">
    <property type="entry name" value="Class II aldolase/adducin N-terminal domain"/>
    <property type="match status" value="1"/>
</dbReference>
<dbReference type="HAMAP" id="MF_03116">
    <property type="entry name" value="Salvage_MtnB_euk"/>
    <property type="match status" value="1"/>
</dbReference>
<dbReference type="InterPro" id="IPR001303">
    <property type="entry name" value="Aldolase_II/adducin_N"/>
</dbReference>
<dbReference type="InterPro" id="IPR036409">
    <property type="entry name" value="Aldolase_II/adducin_N_sf"/>
</dbReference>
<dbReference type="InterPro" id="IPR017714">
    <property type="entry name" value="MethylthioRu-1-P_deHdtase_MtnB"/>
</dbReference>
<dbReference type="InterPro" id="IPR027514">
    <property type="entry name" value="Salvage_MtnB_euk"/>
</dbReference>
<dbReference type="NCBIfam" id="TIGR03328">
    <property type="entry name" value="salvage_mtnB"/>
    <property type="match status" value="1"/>
</dbReference>
<dbReference type="PANTHER" id="PTHR10640">
    <property type="entry name" value="METHYLTHIORIBULOSE-1-PHOSPHATE DEHYDRATASE"/>
    <property type="match status" value="1"/>
</dbReference>
<dbReference type="PANTHER" id="PTHR10640:SF7">
    <property type="entry name" value="METHYLTHIORIBULOSE-1-PHOSPHATE DEHYDRATASE"/>
    <property type="match status" value="1"/>
</dbReference>
<dbReference type="Pfam" id="PF00596">
    <property type="entry name" value="Aldolase_II"/>
    <property type="match status" value="1"/>
</dbReference>
<dbReference type="SMART" id="SM01007">
    <property type="entry name" value="Aldolase_II"/>
    <property type="match status" value="1"/>
</dbReference>
<dbReference type="SUPFAM" id="SSF53639">
    <property type="entry name" value="AraD/HMP-PK domain-like"/>
    <property type="match status" value="1"/>
</dbReference>
<organism>
    <name type="scientific">Drosophila mojavensis</name>
    <name type="common">Fruit fly</name>
    <dbReference type="NCBI Taxonomy" id="7230"/>
    <lineage>
        <taxon>Eukaryota</taxon>
        <taxon>Metazoa</taxon>
        <taxon>Ecdysozoa</taxon>
        <taxon>Arthropoda</taxon>
        <taxon>Hexapoda</taxon>
        <taxon>Insecta</taxon>
        <taxon>Pterygota</taxon>
        <taxon>Neoptera</taxon>
        <taxon>Endopterygota</taxon>
        <taxon>Diptera</taxon>
        <taxon>Brachycera</taxon>
        <taxon>Muscomorpha</taxon>
        <taxon>Ephydroidea</taxon>
        <taxon>Drosophilidae</taxon>
        <taxon>Drosophila</taxon>
    </lineage>
</organism>
<gene>
    <name type="ORF">GI14333</name>
</gene>
<evidence type="ECO:0000255" key="1">
    <source>
        <dbReference type="HAMAP-Rule" id="MF_03116"/>
    </source>
</evidence>
<comment type="function">
    <text evidence="1">Catalyzes the dehydration of methylthioribulose-1-phosphate (MTRu-1-P) into 2,3-diketo-5-methylthiopentyl-1-phosphate (DK-MTP-1-P).</text>
</comment>
<comment type="catalytic activity">
    <reaction evidence="1">
        <text>5-(methylsulfanyl)-D-ribulose 1-phosphate = 5-methylsulfanyl-2,3-dioxopentyl phosphate + H2O</text>
        <dbReference type="Rhea" id="RHEA:15549"/>
        <dbReference type="ChEBI" id="CHEBI:15377"/>
        <dbReference type="ChEBI" id="CHEBI:58548"/>
        <dbReference type="ChEBI" id="CHEBI:58828"/>
        <dbReference type="EC" id="4.2.1.109"/>
    </reaction>
</comment>
<comment type="cofactor">
    <cofactor evidence="1">
        <name>Zn(2+)</name>
        <dbReference type="ChEBI" id="CHEBI:29105"/>
    </cofactor>
    <text evidence="1">Binds 1 zinc ion per subunit.</text>
</comment>
<comment type="pathway">
    <text evidence="1">Amino-acid biosynthesis; L-methionine biosynthesis via salvage pathway; L-methionine from S-methyl-5-thio-alpha-D-ribose 1-phosphate: step 2/6.</text>
</comment>
<comment type="subcellular location">
    <subcellularLocation>
        <location evidence="1">Cytoplasm</location>
    </subcellularLocation>
</comment>
<comment type="similarity">
    <text evidence="1">Belongs to the aldolase class II family. MtnB subfamily.</text>
</comment>
<protein>
    <recommendedName>
        <fullName evidence="1">Probable methylthioribulose-1-phosphate dehydratase</fullName>
        <shortName evidence="1">MTRu-1-P dehydratase</shortName>
        <ecNumber evidence="1">4.2.1.109</ecNumber>
    </recommendedName>
</protein>
<proteinExistence type="inferred from homology"/>
<sequence length="227" mass="25904">MASSIFRDLPAEHPRHLIPALCAQFYNLGWVTGTGGGMSIKYNNEIYIAPSGVQKERMQPEDLFVQDIDGKDLQLPPEIKGLKKSQCTPLFMLAYRHRNAAAVIHTHSQHAVMATLLWPGKTFRCTHLEMIKGVYDEADKRYLRYDEQLVVPIIENTPHERDLADSMYAAMMEYPGCSAVLVRRHGVYVWGQTWEKTKTMSECYDYLFSIAVQMKTAGLNPEKFENA</sequence>
<feature type="chain" id="PRO_0000393784" description="Probable methylthioribulose-1-phosphate dehydratase">
    <location>
        <begin position="1"/>
        <end position="227"/>
    </location>
</feature>
<feature type="active site" description="Proton donor/acceptor" evidence="1">
    <location>
        <position position="129"/>
    </location>
</feature>
<feature type="binding site" evidence="1">
    <location>
        <position position="87"/>
    </location>
    <ligand>
        <name>substrate</name>
    </ligand>
</feature>
<feature type="binding site" evidence="1">
    <location>
        <position position="105"/>
    </location>
    <ligand>
        <name>Zn(2+)</name>
        <dbReference type="ChEBI" id="CHEBI:29105"/>
    </ligand>
</feature>
<feature type="binding site" evidence="1">
    <location>
        <position position="107"/>
    </location>
    <ligand>
        <name>Zn(2+)</name>
        <dbReference type="ChEBI" id="CHEBI:29105"/>
    </ligand>
</feature>
<feature type="binding site" evidence="1">
    <location>
        <position position="185"/>
    </location>
    <ligand>
        <name>Zn(2+)</name>
        <dbReference type="ChEBI" id="CHEBI:29105"/>
    </ligand>
</feature>
<accession>B4L8M2</accession>
<keyword id="KW-0028">Amino-acid biosynthesis</keyword>
<keyword id="KW-0963">Cytoplasm</keyword>
<keyword id="KW-0456">Lyase</keyword>
<keyword id="KW-0479">Metal-binding</keyword>
<keyword id="KW-0486">Methionine biosynthesis</keyword>
<keyword id="KW-1185">Reference proteome</keyword>
<keyword id="KW-0862">Zinc</keyword>